<protein>
    <recommendedName>
        <fullName evidence="1">S-methyl-5'-thioadenosine phosphorylase</fullName>
        <ecNumber evidence="1">2.4.2.28</ecNumber>
    </recommendedName>
    <alternativeName>
        <fullName evidence="1">5'-methylthioadenosine phosphorylase</fullName>
        <shortName evidence="1">MTA phosphorylase</shortName>
        <shortName evidence="1">MTAP</shortName>
    </alternativeName>
</protein>
<name>MTAP_BRADU</name>
<gene>
    <name evidence="1" type="primary">mtnP</name>
    <name type="ordered locus">blr0960</name>
</gene>
<reference key="1">
    <citation type="journal article" date="2002" name="DNA Res.">
        <title>Complete genomic sequence of nitrogen-fixing symbiotic bacterium Bradyrhizobium japonicum USDA110.</title>
        <authorList>
            <person name="Kaneko T."/>
            <person name="Nakamura Y."/>
            <person name="Sato S."/>
            <person name="Minamisawa K."/>
            <person name="Uchiumi T."/>
            <person name="Sasamoto S."/>
            <person name="Watanabe A."/>
            <person name="Idesawa K."/>
            <person name="Iriguchi M."/>
            <person name="Kawashima K."/>
            <person name="Kohara M."/>
            <person name="Matsumoto M."/>
            <person name="Shimpo S."/>
            <person name="Tsuruoka H."/>
            <person name="Wada T."/>
            <person name="Yamada M."/>
            <person name="Tabata S."/>
        </authorList>
    </citation>
    <scope>NUCLEOTIDE SEQUENCE [LARGE SCALE GENOMIC DNA]</scope>
    <source>
        <strain>JCM 10833 / BCRC 13528 / IAM 13628 / NBRC 14792 / USDA 110</strain>
    </source>
</reference>
<accession>Q89VT5</accession>
<evidence type="ECO:0000255" key="1">
    <source>
        <dbReference type="HAMAP-Rule" id="MF_01963"/>
    </source>
</evidence>
<keyword id="KW-0328">Glycosyltransferase</keyword>
<keyword id="KW-0660">Purine salvage</keyword>
<keyword id="KW-1185">Reference proteome</keyword>
<keyword id="KW-0808">Transferase</keyword>
<sequence length="291" mass="31461">MTQAVLGIIGGSGIYDLPGLEGAHEEVIKSPWGEPSAPLRRGTIAGLPIVFLPRHDKGHRLSPSDINYRANIDVLKRAGVTDLISLSACGSFKEEMPPGTFVLVDQFVDRTHKRESSFFGRGCVAHVSMAHPVSPRLRIHLAAAAEAEGIAIARGGTYVCMEGPQFSTYAESMTYKTSGYSVIGMTNMPEAKLAREAEICYATVAMVTDFDCWHPDHDAVTVQDIIRVLTSNADKAKALVARLAKDFPREHEPCPIGSDRALDTALITAPEARDPELLKKLDAVAGRVLRG</sequence>
<dbReference type="EC" id="2.4.2.28" evidence="1"/>
<dbReference type="EMBL" id="BA000040">
    <property type="protein sequence ID" value="BAC46225.1"/>
    <property type="molecule type" value="Genomic_DNA"/>
</dbReference>
<dbReference type="RefSeq" id="NP_767600.1">
    <property type="nucleotide sequence ID" value="NC_004463.1"/>
</dbReference>
<dbReference type="RefSeq" id="WP_011083781.1">
    <property type="nucleotide sequence ID" value="NC_004463.1"/>
</dbReference>
<dbReference type="SMR" id="Q89VT5"/>
<dbReference type="FunCoup" id="Q89VT5">
    <property type="interactions" value="684"/>
</dbReference>
<dbReference type="STRING" id="224911.AAV28_01640"/>
<dbReference type="EnsemblBacteria" id="BAC46225">
    <property type="protein sequence ID" value="BAC46225"/>
    <property type="gene ID" value="BAC46225"/>
</dbReference>
<dbReference type="GeneID" id="46488229"/>
<dbReference type="KEGG" id="bja:blr0960"/>
<dbReference type="PATRIC" id="fig|224911.44.peg.348"/>
<dbReference type="eggNOG" id="COG0005">
    <property type="taxonomic scope" value="Bacteria"/>
</dbReference>
<dbReference type="HOGENOM" id="CLU_054456_0_1_5"/>
<dbReference type="InParanoid" id="Q89VT5"/>
<dbReference type="OrthoDB" id="1523230at2"/>
<dbReference type="PhylomeDB" id="Q89VT5"/>
<dbReference type="UniPathway" id="UPA00904">
    <property type="reaction ID" value="UER00873"/>
</dbReference>
<dbReference type="Proteomes" id="UP000002526">
    <property type="component" value="Chromosome"/>
</dbReference>
<dbReference type="GO" id="GO:0005829">
    <property type="term" value="C:cytosol"/>
    <property type="evidence" value="ECO:0000318"/>
    <property type="project" value="GO_Central"/>
</dbReference>
<dbReference type="GO" id="GO:0017061">
    <property type="term" value="F:S-methyl-5-thioadenosine phosphorylase activity"/>
    <property type="evidence" value="ECO:0000318"/>
    <property type="project" value="GO_Central"/>
</dbReference>
<dbReference type="GO" id="GO:0019509">
    <property type="term" value="P:L-methionine salvage from methylthioadenosine"/>
    <property type="evidence" value="ECO:0000318"/>
    <property type="project" value="GO_Central"/>
</dbReference>
<dbReference type="GO" id="GO:0006166">
    <property type="term" value="P:purine ribonucleoside salvage"/>
    <property type="evidence" value="ECO:0007669"/>
    <property type="project" value="UniProtKB-KW"/>
</dbReference>
<dbReference type="CDD" id="cd09010">
    <property type="entry name" value="MTAP_SsMTAPII_like_MTIP"/>
    <property type="match status" value="1"/>
</dbReference>
<dbReference type="FunFam" id="3.40.50.1580:FF:000012">
    <property type="entry name" value="Probable 6-oxopurine nucleoside phosphorylase"/>
    <property type="match status" value="1"/>
</dbReference>
<dbReference type="Gene3D" id="3.40.50.1580">
    <property type="entry name" value="Nucleoside phosphorylase domain"/>
    <property type="match status" value="1"/>
</dbReference>
<dbReference type="HAMAP" id="MF_01963">
    <property type="entry name" value="MTAP"/>
    <property type="match status" value="1"/>
</dbReference>
<dbReference type="InterPro" id="IPR010044">
    <property type="entry name" value="MTAP"/>
</dbReference>
<dbReference type="InterPro" id="IPR000845">
    <property type="entry name" value="Nucleoside_phosphorylase_d"/>
</dbReference>
<dbReference type="InterPro" id="IPR035994">
    <property type="entry name" value="Nucleoside_phosphorylase_sf"/>
</dbReference>
<dbReference type="NCBIfam" id="TIGR01694">
    <property type="entry name" value="MTAP"/>
    <property type="match status" value="1"/>
</dbReference>
<dbReference type="NCBIfam" id="NF006492">
    <property type="entry name" value="PRK08931.1"/>
    <property type="match status" value="1"/>
</dbReference>
<dbReference type="PANTHER" id="PTHR42679">
    <property type="entry name" value="S-METHYL-5'-THIOADENOSINE PHOSPHORYLASE"/>
    <property type="match status" value="1"/>
</dbReference>
<dbReference type="PANTHER" id="PTHR42679:SF2">
    <property type="entry name" value="S-METHYL-5'-THIOADENOSINE PHOSPHORYLASE"/>
    <property type="match status" value="1"/>
</dbReference>
<dbReference type="Pfam" id="PF01048">
    <property type="entry name" value="PNP_UDP_1"/>
    <property type="match status" value="1"/>
</dbReference>
<dbReference type="SUPFAM" id="SSF53167">
    <property type="entry name" value="Purine and uridine phosphorylases"/>
    <property type="match status" value="1"/>
</dbReference>
<comment type="function">
    <text evidence="1">Catalyzes the reversible phosphorylation of S-methyl-5'-thioadenosine (MTA) to adenine and 5-methylthioribose-1-phosphate. Involved in the breakdown of MTA, a major by-product of polyamine biosynthesis. Responsible for the first step in the methionine salvage pathway after MTA has been generated from S-adenosylmethionine. Has broad substrate specificity with 6-aminopurine nucleosides as preferred substrates.</text>
</comment>
<comment type="catalytic activity">
    <reaction evidence="1">
        <text>S-methyl-5'-thioadenosine + phosphate = 5-(methylsulfanyl)-alpha-D-ribose 1-phosphate + adenine</text>
        <dbReference type="Rhea" id="RHEA:11852"/>
        <dbReference type="ChEBI" id="CHEBI:16708"/>
        <dbReference type="ChEBI" id="CHEBI:17509"/>
        <dbReference type="ChEBI" id="CHEBI:43474"/>
        <dbReference type="ChEBI" id="CHEBI:58533"/>
        <dbReference type="EC" id="2.4.2.28"/>
    </reaction>
</comment>
<comment type="pathway">
    <text evidence="1">Amino-acid biosynthesis; L-methionine biosynthesis via salvage pathway; S-methyl-5-thio-alpha-D-ribose 1-phosphate from S-methyl-5'-thioadenosine (phosphorylase route): step 1/1.</text>
</comment>
<comment type="subunit">
    <text evidence="1">Homohexamer. Dimer of a homotrimer.</text>
</comment>
<comment type="similarity">
    <text evidence="1">Belongs to the PNP/MTAP phosphorylase family. MTAP subfamily.</text>
</comment>
<feature type="chain" id="PRO_0000415090" description="S-methyl-5'-thioadenosine phosphorylase">
    <location>
        <begin position="1"/>
        <end position="291"/>
    </location>
</feature>
<feature type="binding site" evidence="1">
    <location>
        <position position="12"/>
    </location>
    <ligand>
        <name>phosphate</name>
        <dbReference type="ChEBI" id="CHEBI:43474"/>
    </ligand>
</feature>
<feature type="binding site" evidence="1">
    <location>
        <begin position="54"/>
        <end position="55"/>
    </location>
    <ligand>
        <name>phosphate</name>
        <dbReference type="ChEBI" id="CHEBI:43474"/>
    </ligand>
</feature>
<feature type="binding site" evidence="1">
    <location>
        <begin position="87"/>
        <end position="88"/>
    </location>
    <ligand>
        <name>phosphate</name>
        <dbReference type="ChEBI" id="CHEBI:43474"/>
    </ligand>
</feature>
<feature type="binding site" evidence="1">
    <location>
        <position position="185"/>
    </location>
    <ligand>
        <name>substrate</name>
    </ligand>
</feature>
<feature type="binding site" evidence="1">
    <location>
        <position position="186"/>
    </location>
    <ligand>
        <name>phosphate</name>
        <dbReference type="ChEBI" id="CHEBI:43474"/>
    </ligand>
</feature>
<feature type="binding site" evidence="1">
    <location>
        <begin position="209"/>
        <end position="211"/>
    </location>
    <ligand>
        <name>substrate</name>
    </ligand>
</feature>
<feature type="site" description="Important for substrate specificity" evidence="1">
    <location>
        <position position="167"/>
    </location>
</feature>
<feature type="site" description="Important for substrate specificity" evidence="1">
    <location>
        <position position="222"/>
    </location>
</feature>
<organism>
    <name type="scientific">Bradyrhizobium diazoefficiens (strain JCM 10833 / BCRC 13528 / IAM 13628 / NBRC 14792 / USDA 110)</name>
    <dbReference type="NCBI Taxonomy" id="224911"/>
    <lineage>
        <taxon>Bacteria</taxon>
        <taxon>Pseudomonadati</taxon>
        <taxon>Pseudomonadota</taxon>
        <taxon>Alphaproteobacteria</taxon>
        <taxon>Hyphomicrobiales</taxon>
        <taxon>Nitrobacteraceae</taxon>
        <taxon>Bradyrhizobium</taxon>
    </lineage>
</organism>
<proteinExistence type="inferred from homology"/>